<protein>
    <recommendedName>
        <fullName evidence="1">Translational regulator CsrA</fullName>
    </recommendedName>
</protein>
<gene>
    <name evidence="1" type="primary">csrA</name>
    <name type="ordered locus">DMR_31480</name>
</gene>
<sequence>MLILTRRPGESLHLGDHIKITVLGVQGKQIKIGLEVPDDMQVYREEVYLRVLEQNRQALCAMDSDVLAAAKLWPKKTNE</sequence>
<accession>C4XIS1</accession>
<feature type="chain" id="PRO_1000203639" description="Translational regulator CsrA">
    <location>
        <begin position="1"/>
        <end position="79"/>
    </location>
</feature>
<evidence type="ECO:0000255" key="1">
    <source>
        <dbReference type="HAMAP-Rule" id="MF_00167"/>
    </source>
</evidence>
<comment type="function">
    <text evidence="1">A translational regulator that binds mRNA to regulate translation initiation and/or mRNA stability. Usually binds in the 5'-UTR at or near the Shine-Dalgarno sequence preventing ribosome-binding, thus repressing translation. Its main target seems to be the major flagellin gene, while its function is anatagonized by FliW.</text>
</comment>
<comment type="subunit">
    <text evidence="1">Homodimer; the beta-strands of each monomer intercalate to form a hydrophobic core, while the alpha-helices form wings that extend away from the core.</text>
</comment>
<comment type="subcellular location">
    <subcellularLocation>
        <location evidence="1">Cytoplasm</location>
    </subcellularLocation>
</comment>
<comment type="similarity">
    <text evidence="1">Belongs to the CsrA/RsmA family.</text>
</comment>
<proteinExistence type="inferred from homology"/>
<dbReference type="EMBL" id="AP010904">
    <property type="protein sequence ID" value="BAH76639.1"/>
    <property type="molecule type" value="Genomic_DNA"/>
</dbReference>
<dbReference type="RefSeq" id="WP_006918472.1">
    <property type="nucleotide sequence ID" value="NC_012796.1"/>
</dbReference>
<dbReference type="SMR" id="C4XIS1"/>
<dbReference type="STRING" id="573370.DMR_31480"/>
<dbReference type="KEGG" id="dma:DMR_31480"/>
<dbReference type="eggNOG" id="COG1551">
    <property type="taxonomic scope" value="Bacteria"/>
</dbReference>
<dbReference type="HOGENOM" id="CLU_164837_0_2_7"/>
<dbReference type="OrthoDB" id="9809061at2"/>
<dbReference type="Proteomes" id="UP000009071">
    <property type="component" value="Chromosome"/>
</dbReference>
<dbReference type="GO" id="GO:0005829">
    <property type="term" value="C:cytosol"/>
    <property type="evidence" value="ECO:0007669"/>
    <property type="project" value="TreeGrafter"/>
</dbReference>
<dbReference type="GO" id="GO:0048027">
    <property type="term" value="F:mRNA 5'-UTR binding"/>
    <property type="evidence" value="ECO:0007669"/>
    <property type="project" value="UniProtKB-UniRule"/>
</dbReference>
<dbReference type="GO" id="GO:0044781">
    <property type="term" value="P:bacterial-type flagellum organization"/>
    <property type="evidence" value="ECO:0007669"/>
    <property type="project" value="UniProtKB-KW"/>
</dbReference>
<dbReference type="GO" id="GO:0006402">
    <property type="term" value="P:mRNA catabolic process"/>
    <property type="evidence" value="ECO:0007669"/>
    <property type="project" value="InterPro"/>
</dbReference>
<dbReference type="GO" id="GO:0045947">
    <property type="term" value="P:negative regulation of translational initiation"/>
    <property type="evidence" value="ECO:0007669"/>
    <property type="project" value="UniProtKB-UniRule"/>
</dbReference>
<dbReference type="GO" id="GO:1902208">
    <property type="term" value="P:regulation of bacterial-type flagellum assembly"/>
    <property type="evidence" value="ECO:0007669"/>
    <property type="project" value="UniProtKB-UniRule"/>
</dbReference>
<dbReference type="GO" id="GO:0006109">
    <property type="term" value="P:regulation of carbohydrate metabolic process"/>
    <property type="evidence" value="ECO:0007669"/>
    <property type="project" value="InterPro"/>
</dbReference>
<dbReference type="Gene3D" id="2.60.40.4380">
    <property type="entry name" value="Translational regulator CsrA"/>
    <property type="match status" value="1"/>
</dbReference>
<dbReference type="HAMAP" id="MF_00167">
    <property type="entry name" value="CsrA"/>
    <property type="match status" value="1"/>
</dbReference>
<dbReference type="InterPro" id="IPR003751">
    <property type="entry name" value="CsrA"/>
</dbReference>
<dbReference type="InterPro" id="IPR036107">
    <property type="entry name" value="CsrA_sf"/>
</dbReference>
<dbReference type="NCBIfam" id="TIGR00202">
    <property type="entry name" value="csrA"/>
    <property type="match status" value="1"/>
</dbReference>
<dbReference type="NCBIfam" id="NF002469">
    <property type="entry name" value="PRK01712.1"/>
    <property type="match status" value="1"/>
</dbReference>
<dbReference type="PANTHER" id="PTHR34984">
    <property type="entry name" value="CARBON STORAGE REGULATOR"/>
    <property type="match status" value="1"/>
</dbReference>
<dbReference type="PANTHER" id="PTHR34984:SF1">
    <property type="entry name" value="CARBON STORAGE REGULATOR"/>
    <property type="match status" value="1"/>
</dbReference>
<dbReference type="Pfam" id="PF02599">
    <property type="entry name" value="CsrA"/>
    <property type="match status" value="1"/>
</dbReference>
<dbReference type="SUPFAM" id="SSF117130">
    <property type="entry name" value="CsrA-like"/>
    <property type="match status" value="1"/>
</dbReference>
<name>CSRA_SOLM1</name>
<organism>
    <name type="scientific">Solidesulfovibrio magneticus (strain ATCC 700980 / DSM 13731 / RS-1)</name>
    <name type="common">Desulfovibrio magneticus</name>
    <dbReference type="NCBI Taxonomy" id="573370"/>
    <lineage>
        <taxon>Bacteria</taxon>
        <taxon>Pseudomonadati</taxon>
        <taxon>Thermodesulfobacteriota</taxon>
        <taxon>Desulfovibrionia</taxon>
        <taxon>Desulfovibrionales</taxon>
        <taxon>Desulfovibrionaceae</taxon>
        <taxon>Solidesulfovibrio</taxon>
    </lineage>
</organism>
<keyword id="KW-1005">Bacterial flagellum biogenesis</keyword>
<keyword id="KW-0963">Cytoplasm</keyword>
<keyword id="KW-0678">Repressor</keyword>
<keyword id="KW-0694">RNA-binding</keyword>
<keyword id="KW-0810">Translation regulation</keyword>
<reference key="1">
    <citation type="journal article" date="2009" name="Genome Res.">
        <title>Whole genome sequence of Desulfovibrio magneticus strain RS-1 revealed common gene clusters in magnetotactic bacteria.</title>
        <authorList>
            <person name="Nakazawa H."/>
            <person name="Arakaki A."/>
            <person name="Narita-Yamada S."/>
            <person name="Yashiro I."/>
            <person name="Jinno K."/>
            <person name="Aoki N."/>
            <person name="Tsuruyama A."/>
            <person name="Okamura Y."/>
            <person name="Tanikawa S."/>
            <person name="Fujita N."/>
            <person name="Takeyama H."/>
            <person name="Matsunaga T."/>
        </authorList>
    </citation>
    <scope>NUCLEOTIDE SEQUENCE [LARGE SCALE GENOMIC DNA]</scope>
    <source>
        <strain>ATCC 700980 / DSM 13731 / RS-1</strain>
    </source>
</reference>